<reference key="1">
    <citation type="submission" date="2004-12" db="EMBL/GenBank/DDBJ databases">
        <title>The genome sequence of Borrelia hermsii and Borrelia turicatae: comparative analysis of two agents of endemic N. America relapsing fever.</title>
        <authorList>
            <person name="Porcella S.F."/>
            <person name="Raffel S.J."/>
            <person name="Schrumpf M.E."/>
            <person name="Montgomery B."/>
            <person name="Smith T."/>
            <person name="Schwan T.G."/>
        </authorList>
    </citation>
    <scope>NUCLEOTIDE SEQUENCE [LARGE SCALE GENOMIC DNA]</scope>
    <source>
        <strain>HS1 / DAH</strain>
    </source>
</reference>
<dbReference type="EC" id="6.3.2.4" evidence="2"/>
<dbReference type="EMBL" id="CP000048">
    <property type="protein sequence ID" value="AAX16716.1"/>
    <property type="molecule type" value="Genomic_DNA"/>
</dbReference>
<dbReference type="SMR" id="B2RZR0"/>
<dbReference type="KEGG" id="bhr:BH0200"/>
<dbReference type="HOGENOM" id="CLU_039268_0_0_12"/>
<dbReference type="UniPathway" id="UPA00219"/>
<dbReference type="Proteomes" id="UP000008834">
    <property type="component" value="Chromosome"/>
</dbReference>
<dbReference type="GO" id="GO:0005829">
    <property type="term" value="C:cytosol"/>
    <property type="evidence" value="ECO:0007669"/>
    <property type="project" value="TreeGrafter"/>
</dbReference>
<dbReference type="GO" id="GO:0005524">
    <property type="term" value="F:ATP binding"/>
    <property type="evidence" value="ECO:0007669"/>
    <property type="project" value="UniProtKB-KW"/>
</dbReference>
<dbReference type="GO" id="GO:0008716">
    <property type="term" value="F:D-alanine-D-alanine ligase activity"/>
    <property type="evidence" value="ECO:0007669"/>
    <property type="project" value="UniProtKB-UniRule"/>
</dbReference>
<dbReference type="GO" id="GO:0046872">
    <property type="term" value="F:metal ion binding"/>
    <property type="evidence" value="ECO:0007669"/>
    <property type="project" value="UniProtKB-KW"/>
</dbReference>
<dbReference type="GO" id="GO:0071555">
    <property type="term" value="P:cell wall organization"/>
    <property type="evidence" value="ECO:0007669"/>
    <property type="project" value="UniProtKB-KW"/>
</dbReference>
<dbReference type="GO" id="GO:0009252">
    <property type="term" value="P:peptidoglycan biosynthetic process"/>
    <property type="evidence" value="ECO:0007669"/>
    <property type="project" value="UniProtKB-UniRule"/>
</dbReference>
<dbReference type="GO" id="GO:0008360">
    <property type="term" value="P:regulation of cell shape"/>
    <property type="evidence" value="ECO:0007669"/>
    <property type="project" value="UniProtKB-KW"/>
</dbReference>
<dbReference type="Gene3D" id="3.40.50.20">
    <property type="match status" value="1"/>
</dbReference>
<dbReference type="Gene3D" id="3.30.1490.20">
    <property type="entry name" value="ATP-grasp fold, A domain"/>
    <property type="match status" value="1"/>
</dbReference>
<dbReference type="Gene3D" id="3.30.470.20">
    <property type="entry name" value="ATP-grasp fold, B domain"/>
    <property type="match status" value="1"/>
</dbReference>
<dbReference type="HAMAP" id="MF_00047">
    <property type="entry name" value="Dala_Dala_lig"/>
    <property type="match status" value="1"/>
</dbReference>
<dbReference type="InterPro" id="IPR011761">
    <property type="entry name" value="ATP-grasp"/>
</dbReference>
<dbReference type="InterPro" id="IPR013815">
    <property type="entry name" value="ATP_grasp_subdomain_1"/>
</dbReference>
<dbReference type="InterPro" id="IPR000291">
    <property type="entry name" value="D-Ala_lig_Van_CS"/>
</dbReference>
<dbReference type="InterPro" id="IPR005905">
    <property type="entry name" value="D_ala_D_ala"/>
</dbReference>
<dbReference type="InterPro" id="IPR011095">
    <property type="entry name" value="Dala_Dala_lig_C"/>
</dbReference>
<dbReference type="InterPro" id="IPR011127">
    <property type="entry name" value="Dala_Dala_lig_N"/>
</dbReference>
<dbReference type="InterPro" id="IPR016185">
    <property type="entry name" value="PreATP-grasp_dom_sf"/>
</dbReference>
<dbReference type="NCBIfam" id="TIGR01205">
    <property type="entry name" value="D_ala_D_alaTIGR"/>
    <property type="match status" value="1"/>
</dbReference>
<dbReference type="NCBIfam" id="NF002528">
    <property type="entry name" value="PRK01966.1-4"/>
    <property type="match status" value="1"/>
</dbReference>
<dbReference type="NCBIfam" id="NF011168">
    <property type="entry name" value="PRK14570.1"/>
    <property type="match status" value="1"/>
</dbReference>
<dbReference type="PANTHER" id="PTHR23132">
    <property type="entry name" value="D-ALANINE--D-ALANINE LIGASE"/>
    <property type="match status" value="1"/>
</dbReference>
<dbReference type="PANTHER" id="PTHR23132:SF25">
    <property type="entry name" value="D-ALANINE--D-ALANINE LIGASE A"/>
    <property type="match status" value="1"/>
</dbReference>
<dbReference type="Pfam" id="PF07478">
    <property type="entry name" value="Dala_Dala_lig_C"/>
    <property type="match status" value="1"/>
</dbReference>
<dbReference type="Pfam" id="PF01820">
    <property type="entry name" value="Dala_Dala_lig_N"/>
    <property type="match status" value="1"/>
</dbReference>
<dbReference type="PIRSF" id="PIRSF039102">
    <property type="entry name" value="Ddl/VanB"/>
    <property type="match status" value="1"/>
</dbReference>
<dbReference type="SUPFAM" id="SSF56059">
    <property type="entry name" value="Glutathione synthetase ATP-binding domain-like"/>
    <property type="match status" value="1"/>
</dbReference>
<dbReference type="SUPFAM" id="SSF52440">
    <property type="entry name" value="PreATP-grasp domain"/>
    <property type="match status" value="1"/>
</dbReference>
<dbReference type="PROSITE" id="PS50975">
    <property type="entry name" value="ATP_GRASP"/>
    <property type="match status" value="1"/>
</dbReference>
<dbReference type="PROSITE" id="PS00843">
    <property type="entry name" value="DALA_DALA_LIGASE_1"/>
    <property type="match status" value="1"/>
</dbReference>
<dbReference type="PROSITE" id="PS00844">
    <property type="entry name" value="DALA_DALA_LIGASE_2"/>
    <property type="match status" value="1"/>
</dbReference>
<gene>
    <name evidence="2" type="primary">ddl</name>
    <name type="ordered locus">BH0200</name>
</gene>
<comment type="function">
    <text evidence="2">Cell wall formation.</text>
</comment>
<comment type="catalytic activity">
    <reaction evidence="2">
        <text>2 D-alanine + ATP = D-alanyl-D-alanine + ADP + phosphate + H(+)</text>
        <dbReference type="Rhea" id="RHEA:11224"/>
        <dbReference type="ChEBI" id="CHEBI:15378"/>
        <dbReference type="ChEBI" id="CHEBI:30616"/>
        <dbReference type="ChEBI" id="CHEBI:43474"/>
        <dbReference type="ChEBI" id="CHEBI:57416"/>
        <dbReference type="ChEBI" id="CHEBI:57822"/>
        <dbReference type="ChEBI" id="CHEBI:456216"/>
        <dbReference type="EC" id="6.3.2.4"/>
    </reaction>
</comment>
<comment type="cofactor">
    <cofactor evidence="1">
        <name>Mg(2+)</name>
        <dbReference type="ChEBI" id="CHEBI:18420"/>
    </cofactor>
    <cofactor evidence="1">
        <name>Mn(2+)</name>
        <dbReference type="ChEBI" id="CHEBI:29035"/>
    </cofactor>
    <text evidence="1">Binds 2 magnesium or manganese ions per subunit.</text>
</comment>
<comment type="pathway">
    <text evidence="2">Cell wall biogenesis; peptidoglycan biosynthesis.</text>
</comment>
<comment type="subcellular location">
    <subcellularLocation>
        <location evidence="2">Cytoplasm</location>
    </subcellularLocation>
</comment>
<comment type="similarity">
    <text evidence="2">Belongs to the D-alanine--D-alanine ligase family.</text>
</comment>
<keyword id="KW-0067">ATP-binding</keyword>
<keyword id="KW-0133">Cell shape</keyword>
<keyword id="KW-0961">Cell wall biogenesis/degradation</keyword>
<keyword id="KW-0963">Cytoplasm</keyword>
<keyword id="KW-0436">Ligase</keyword>
<keyword id="KW-0460">Magnesium</keyword>
<keyword id="KW-0464">Manganese</keyword>
<keyword id="KW-0479">Metal-binding</keyword>
<keyword id="KW-0547">Nucleotide-binding</keyword>
<keyword id="KW-0573">Peptidoglycan synthesis</keyword>
<feature type="chain" id="PRO_1000091162" description="D-alanine--D-alanine ligase">
    <location>
        <begin position="1"/>
        <end position="365"/>
    </location>
</feature>
<feature type="domain" description="ATP-grasp" evidence="2">
    <location>
        <begin position="135"/>
        <end position="345"/>
    </location>
</feature>
<feature type="binding site" evidence="2">
    <location>
        <begin position="168"/>
        <end position="223"/>
    </location>
    <ligand>
        <name>ATP</name>
        <dbReference type="ChEBI" id="CHEBI:30616"/>
    </ligand>
</feature>
<feature type="binding site" evidence="2">
    <location>
        <position position="298"/>
    </location>
    <ligand>
        <name>Mg(2+)</name>
        <dbReference type="ChEBI" id="CHEBI:18420"/>
        <label>1</label>
    </ligand>
</feature>
<feature type="binding site" evidence="2">
    <location>
        <position position="312"/>
    </location>
    <ligand>
        <name>Mg(2+)</name>
        <dbReference type="ChEBI" id="CHEBI:18420"/>
        <label>1</label>
    </ligand>
</feature>
<feature type="binding site" evidence="2">
    <location>
        <position position="312"/>
    </location>
    <ligand>
        <name>Mg(2+)</name>
        <dbReference type="ChEBI" id="CHEBI:18420"/>
        <label>2</label>
    </ligand>
</feature>
<feature type="binding site" evidence="2">
    <location>
        <position position="314"/>
    </location>
    <ligand>
        <name>Mg(2+)</name>
        <dbReference type="ChEBI" id="CHEBI:18420"/>
        <label>2</label>
    </ligand>
</feature>
<sequence>MMKKNLMLIFGGVSFEHEISLRSAYGIYSALMKLDKYNLYPSFIDKITGIWYLLDSVPDAPELIKRDSSAIISLIPGCGIFVNDEDLEIDVVFPIVHGRTGEDGAIQGFLKMMDIPCVGAGILGSAISINKYFCKLLLKSFNIPLVPFIGFRKYDYFLDKEGIKKDIKQSLNYPVIVKPAMLGSSIGISIAYNDTQIEKCIEEAFEYDLTVVVEKFMKVREIECSVIGNEQIKIFTPGEIVVQDFVFYDYDAKYSTIPGNSVVFNIPARLDMKHLLDIKEYAFLTYKCLELRGMARIDFLIEKDTNLIYVNEINTIPGFTDISMFSKMCEHDGLDYESLVDNLVSLAFQSYAKRKERIDFKRLEN</sequence>
<accession>B2RZR0</accession>
<name>DDL_BORHD</name>
<organism>
    <name type="scientific">Borrelia hermsii (strain HS1 / DAH)</name>
    <dbReference type="NCBI Taxonomy" id="314723"/>
    <lineage>
        <taxon>Bacteria</taxon>
        <taxon>Pseudomonadati</taxon>
        <taxon>Spirochaetota</taxon>
        <taxon>Spirochaetia</taxon>
        <taxon>Spirochaetales</taxon>
        <taxon>Borreliaceae</taxon>
        <taxon>Borrelia</taxon>
    </lineage>
</organism>
<evidence type="ECO:0000250" key="1"/>
<evidence type="ECO:0000255" key="2">
    <source>
        <dbReference type="HAMAP-Rule" id="MF_00047"/>
    </source>
</evidence>
<proteinExistence type="inferred from homology"/>
<protein>
    <recommendedName>
        <fullName evidence="2">D-alanine--D-alanine ligase</fullName>
        <ecNumber evidence="2">6.3.2.4</ecNumber>
    </recommendedName>
    <alternativeName>
        <fullName evidence="2">D-Ala-D-Ala ligase</fullName>
    </alternativeName>
    <alternativeName>
        <fullName evidence="2">D-alanylalanine synthetase</fullName>
    </alternativeName>
</protein>